<reference key="1">
    <citation type="journal article" date="2009" name="Proc. Natl. Acad. Sci. U.S.A.">
        <title>Biogeography of the Sulfolobus islandicus pan-genome.</title>
        <authorList>
            <person name="Reno M.L."/>
            <person name="Held N.L."/>
            <person name="Fields C.J."/>
            <person name="Burke P.V."/>
            <person name="Whitaker R.J."/>
        </authorList>
    </citation>
    <scope>NUCLEOTIDE SEQUENCE [LARGE SCALE GENOMIC DNA]</scope>
    <source>
        <strain>M.16.4 / Kamchatka #3</strain>
    </source>
</reference>
<accession>C4KIP3</accession>
<gene>
    <name evidence="1" type="primary">rpl10e</name>
    <name type="ordered locus">M164_1854</name>
</gene>
<protein>
    <recommendedName>
        <fullName evidence="1">Large ribosomal subunit protein uL16</fullName>
    </recommendedName>
    <alternativeName>
        <fullName evidence="2">50S ribosomal protein L10e</fullName>
    </alternativeName>
</protein>
<sequence>MPLRPGRCYRHFSGPAYTRKEYIPGIPQPKITKFTSGNPNGDYDYEVRLITTEIGQIRHNALEAVRTITLKTLTKRTGSETSFFMWILKYPHHVLRENKMMAFAGADRLQDGMRLSFGTPIGTAARIEKLGEILIVVKVKKEHLDFAKEALKIASKKLPLRTRIEIIPLRPIRQEVQS</sequence>
<feature type="chain" id="PRO_1000206199" description="Large ribosomal subunit protein uL16">
    <location>
        <begin position="1"/>
        <end position="178"/>
    </location>
</feature>
<dbReference type="EMBL" id="CP001402">
    <property type="protein sequence ID" value="ACR42457.1"/>
    <property type="molecule type" value="Genomic_DNA"/>
</dbReference>
<dbReference type="RefSeq" id="WP_012711781.1">
    <property type="nucleotide sequence ID" value="NC_012726.1"/>
</dbReference>
<dbReference type="SMR" id="C4KIP3"/>
<dbReference type="KEGG" id="sid:M164_1854"/>
<dbReference type="HOGENOM" id="CLU_084051_0_2_2"/>
<dbReference type="Proteomes" id="UP000001479">
    <property type="component" value="Chromosome"/>
</dbReference>
<dbReference type="GO" id="GO:1990904">
    <property type="term" value="C:ribonucleoprotein complex"/>
    <property type="evidence" value="ECO:0007669"/>
    <property type="project" value="UniProtKB-KW"/>
</dbReference>
<dbReference type="GO" id="GO:0005840">
    <property type="term" value="C:ribosome"/>
    <property type="evidence" value="ECO:0007669"/>
    <property type="project" value="UniProtKB-KW"/>
</dbReference>
<dbReference type="GO" id="GO:0003735">
    <property type="term" value="F:structural constituent of ribosome"/>
    <property type="evidence" value="ECO:0007669"/>
    <property type="project" value="InterPro"/>
</dbReference>
<dbReference type="GO" id="GO:0006412">
    <property type="term" value="P:translation"/>
    <property type="evidence" value="ECO:0007669"/>
    <property type="project" value="UniProtKB-UniRule"/>
</dbReference>
<dbReference type="CDD" id="cd01433">
    <property type="entry name" value="Ribosomal_L16_L10e"/>
    <property type="match status" value="1"/>
</dbReference>
<dbReference type="FunFam" id="3.90.1170.10:FF:000008">
    <property type="entry name" value="50S ribosomal protein L10e"/>
    <property type="match status" value="1"/>
</dbReference>
<dbReference type="Gene3D" id="3.90.1170.10">
    <property type="entry name" value="Ribosomal protein L10e/L16"/>
    <property type="match status" value="1"/>
</dbReference>
<dbReference type="HAMAP" id="MF_00448">
    <property type="entry name" value="Ribosomal_uL16_arch"/>
    <property type="match status" value="1"/>
</dbReference>
<dbReference type="InterPro" id="IPR047873">
    <property type="entry name" value="Ribosomal_uL16"/>
</dbReference>
<dbReference type="InterPro" id="IPR022981">
    <property type="entry name" value="Ribosomal_uL16_arc"/>
</dbReference>
<dbReference type="InterPro" id="IPR018255">
    <property type="entry name" value="Ribosomal_uL16_CS_euk_arc"/>
</dbReference>
<dbReference type="InterPro" id="IPR016180">
    <property type="entry name" value="Ribosomal_uL16_dom"/>
</dbReference>
<dbReference type="InterPro" id="IPR001197">
    <property type="entry name" value="Ribosomal_uL16_euk_arch"/>
</dbReference>
<dbReference type="InterPro" id="IPR036920">
    <property type="entry name" value="Ribosomal_uL16_sf"/>
</dbReference>
<dbReference type="NCBIfam" id="NF003236">
    <property type="entry name" value="PRK04199.1-1"/>
    <property type="match status" value="1"/>
</dbReference>
<dbReference type="NCBIfam" id="NF003239">
    <property type="entry name" value="PRK04199.1-4"/>
    <property type="match status" value="1"/>
</dbReference>
<dbReference type="PANTHER" id="PTHR11726">
    <property type="entry name" value="60S RIBOSOMAL PROTEIN L10"/>
    <property type="match status" value="1"/>
</dbReference>
<dbReference type="Pfam" id="PF00252">
    <property type="entry name" value="Ribosomal_L16"/>
    <property type="match status" value="1"/>
</dbReference>
<dbReference type="PIRSF" id="PIRSF005590">
    <property type="entry name" value="Ribosomal_L10"/>
    <property type="match status" value="1"/>
</dbReference>
<dbReference type="SUPFAM" id="SSF54686">
    <property type="entry name" value="Ribosomal protein L16p/L10e"/>
    <property type="match status" value="1"/>
</dbReference>
<dbReference type="PROSITE" id="PS01257">
    <property type="entry name" value="RIBOSOMAL_L10E"/>
    <property type="match status" value="1"/>
</dbReference>
<keyword id="KW-0687">Ribonucleoprotein</keyword>
<keyword id="KW-0689">Ribosomal protein</keyword>
<name>RL10E_SACI6</name>
<comment type="similarity">
    <text evidence="1">Belongs to the universal ribosomal protein uL16 family.</text>
</comment>
<evidence type="ECO:0000255" key="1">
    <source>
        <dbReference type="HAMAP-Rule" id="MF_00448"/>
    </source>
</evidence>
<evidence type="ECO:0000305" key="2"/>
<proteinExistence type="inferred from homology"/>
<organism>
    <name type="scientific">Saccharolobus islandicus (strain M.16.4 / Kamchatka #3)</name>
    <name type="common">Sulfolobus islandicus</name>
    <dbReference type="NCBI Taxonomy" id="426118"/>
    <lineage>
        <taxon>Archaea</taxon>
        <taxon>Thermoproteota</taxon>
        <taxon>Thermoprotei</taxon>
        <taxon>Sulfolobales</taxon>
        <taxon>Sulfolobaceae</taxon>
        <taxon>Saccharolobus</taxon>
    </lineage>
</organism>